<gene>
    <name type="primary">pheS</name>
    <name type="ordered locus">BU129</name>
</gene>
<name>SYFA_BUCAI</name>
<comment type="catalytic activity">
    <reaction>
        <text>tRNA(Phe) + L-phenylalanine + ATP = L-phenylalanyl-tRNA(Phe) + AMP + diphosphate + H(+)</text>
        <dbReference type="Rhea" id="RHEA:19413"/>
        <dbReference type="Rhea" id="RHEA-COMP:9668"/>
        <dbReference type="Rhea" id="RHEA-COMP:9699"/>
        <dbReference type="ChEBI" id="CHEBI:15378"/>
        <dbReference type="ChEBI" id="CHEBI:30616"/>
        <dbReference type="ChEBI" id="CHEBI:33019"/>
        <dbReference type="ChEBI" id="CHEBI:58095"/>
        <dbReference type="ChEBI" id="CHEBI:78442"/>
        <dbReference type="ChEBI" id="CHEBI:78531"/>
        <dbReference type="ChEBI" id="CHEBI:456215"/>
        <dbReference type="EC" id="6.1.1.20"/>
    </reaction>
</comment>
<comment type="cofactor">
    <cofactor evidence="2">
        <name>Mg(2+)</name>
        <dbReference type="ChEBI" id="CHEBI:18420"/>
    </cofactor>
    <text evidence="2">Binds 2 magnesium ions per tetramer.</text>
</comment>
<comment type="subunit">
    <text evidence="1">Tetramer of two alpha and two beta subunits.</text>
</comment>
<comment type="subcellular location">
    <subcellularLocation>
        <location evidence="1">Cytoplasm</location>
    </subcellularLocation>
</comment>
<comment type="similarity">
    <text evidence="2">Belongs to the class-II aminoacyl-tRNA synthetase family. Phe-tRNA synthetase alpha subunit type 1 subfamily.</text>
</comment>
<comment type="caution">
    <text evidence="2">Lacks the conserved glutamate residue that binds magnesium.</text>
</comment>
<feature type="chain" id="PRO_0000126676" description="Phenylalanine--tRNA ligase alpha subunit">
    <location>
        <begin position="1"/>
        <end position="329"/>
    </location>
</feature>
<dbReference type="EC" id="6.1.1.20"/>
<dbReference type="EMBL" id="BA000003">
    <property type="protein sequence ID" value="BAB12847.1"/>
    <property type="molecule type" value="Genomic_DNA"/>
</dbReference>
<dbReference type="RefSeq" id="NP_239961.1">
    <property type="nucleotide sequence ID" value="NC_002528.1"/>
</dbReference>
<dbReference type="RefSeq" id="WP_010895963.1">
    <property type="nucleotide sequence ID" value="NZ_AP036055.1"/>
</dbReference>
<dbReference type="SMR" id="P57229"/>
<dbReference type="STRING" id="563178.BUAP5A_127"/>
<dbReference type="EnsemblBacteria" id="BAB12847">
    <property type="protein sequence ID" value="BAB12847"/>
    <property type="gene ID" value="BAB12847"/>
</dbReference>
<dbReference type="KEGG" id="buc:BU129"/>
<dbReference type="PATRIC" id="fig|107806.10.peg.138"/>
<dbReference type="eggNOG" id="COG0016">
    <property type="taxonomic scope" value="Bacteria"/>
</dbReference>
<dbReference type="HOGENOM" id="CLU_025086_0_1_6"/>
<dbReference type="Proteomes" id="UP000001806">
    <property type="component" value="Chromosome"/>
</dbReference>
<dbReference type="GO" id="GO:0005737">
    <property type="term" value="C:cytoplasm"/>
    <property type="evidence" value="ECO:0007669"/>
    <property type="project" value="UniProtKB-SubCell"/>
</dbReference>
<dbReference type="GO" id="GO:0005524">
    <property type="term" value="F:ATP binding"/>
    <property type="evidence" value="ECO:0007669"/>
    <property type="project" value="UniProtKB-UniRule"/>
</dbReference>
<dbReference type="GO" id="GO:0000287">
    <property type="term" value="F:magnesium ion binding"/>
    <property type="evidence" value="ECO:0007669"/>
    <property type="project" value="UniProtKB-UniRule"/>
</dbReference>
<dbReference type="GO" id="GO:0004826">
    <property type="term" value="F:phenylalanine-tRNA ligase activity"/>
    <property type="evidence" value="ECO:0007669"/>
    <property type="project" value="UniProtKB-UniRule"/>
</dbReference>
<dbReference type="GO" id="GO:0000049">
    <property type="term" value="F:tRNA binding"/>
    <property type="evidence" value="ECO:0007669"/>
    <property type="project" value="InterPro"/>
</dbReference>
<dbReference type="GO" id="GO:0006432">
    <property type="term" value="P:phenylalanyl-tRNA aminoacylation"/>
    <property type="evidence" value="ECO:0007669"/>
    <property type="project" value="UniProtKB-UniRule"/>
</dbReference>
<dbReference type="CDD" id="cd00496">
    <property type="entry name" value="PheRS_alpha_core"/>
    <property type="match status" value="1"/>
</dbReference>
<dbReference type="FunFam" id="3.30.930.10:FF:000003">
    <property type="entry name" value="Phenylalanine--tRNA ligase alpha subunit"/>
    <property type="match status" value="1"/>
</dbReference>
<dbReference type="Gene3D" id="3.30.930.10">
    <property type="entry name" value="Bira Bifunctional Protein, Domain 2"/>
    <property type="match status" value="1"/>
</dbReference>
<dbReference type="HAMAP" id="MF_00281">
    <property type="entry name" value="Phe_tRNA_synth_alpha1"/>
    <property type="match status" value="1"/>
</dbReference>
<dbReference type="InterPro" id="IPR006195">
    <property type="entry name" value="aa-tRNA-synth_II"/>
</dbReference>
<dbReference type="InterPro" id="IPR045864">
    <property type="entry name" value="aa-tRNA-synth_II/BPL/LPL"/>
</dbReference>
<dbReference type="InterPro" id="IPR004529">
    <property type="entry name" value="Phe-tRNA-synth_IIc_asu"/>
</dbReference>
<dbReference type="InterPro" id="IPR004188">
    <property type="entry name" value="Phe-tRNA_ligase_II_N"/>
</dbReference>
<dbReference type="InterPro" id="IPR022911">
    <property type="entry name" value="Phe_tRNA_ligase_alpha1_bac"/>
</dbReference>
<dbReference type="InterPro" id="IPR002319">
    <property type="entry name" value="Phenylalanyl-tRNA_Synthase"/>
</dbReference>
<dbReference type="InterPro" id="IPR010978">
    <property type="entry name" value="tRNA-bd_arm"/>
</dbReference>
<dbReference type="NCBIfam" id="TIGR00468">
    <property type="entry name" value="pheS"/>
    <property type="match status" value="1"/>
</dbReference>
<dbReference type="PANTHER" id="PTHR11538:SF41">
    <property type="entry name" value="PHENYLALANINE--TRNA LIGASE, MITOCHONDRIAL"/>
    <property type="match status" value="1"/>
</dbReference>
<dbReference type="PANTHER" id="PTHR11538">
    <property type="entry name" value="PHENYLALANYL-TRNA SYNTHETASE"/>
    <property type="match status" value="1"/>
</dbReference>
<dbReference type="Pfam" id="PF02912">
    <property type="entry name" value="Phe_tRNA-synt_N"/>
    <property type="match status" value="1"/>
</dbReference>
<dbReference type="Pfam" id="PF01409">
    <property type="entry name" value="tRNA-synt_2d"/>
    <property type="match status" value="1"/>
</dbReference>
<dbReference type="SUPFAM" id="SSF55681">
    <property type="entry name" value="Class II aaRS and biotin synthetases"/>
    <property type="match status" value="1"/>
</dbReference>
<dbReference type="SUPFAM" id="SSF46589">
    <property type="entry name" value="tRNA-binding arm"/>
    <property type="match status" value="1"/>
</dbReference>
<dbReference type="PROSITE" id="PS50862">
    <property type="entry name" value="AA_TRNA_LIGASE_II"/>
    <property type="match status" value="1"/>
</dbReference>
<accession>P57229</accession>
<keyword id="KW-0030">Aminoacyl-tRNA synthetase</keyword>
<keyword id="KW-0067">ATP-binding</keyword>
<keyword id="KW-0963">Cytoplasm</keyword>
<keyword id="KW-0436">Ligase</keyword>
<keyword id="KW-0460">Magnesium</keyword>
<keyword id="KW-0479">Metal-binding</keyword>
<keyword id="KW-0547">Nucleotide-binding</keyword>
<keyword id="KW-0648">Protein biosynthesis</keyword>
<keyword id="KW-1185">Reference proteome</keyword>
<evidence type="ECO:0000250" key="1"/>
<evidence type="ECO:0000305" key="2"/>
<reference key="1">
    <citation type="journal article" date="2000" name="Nature">
        <title>Genome sequence of the endocellular bacterial symbiont of aphids Buchnera sp. APS.</title>
        <authorList>
            <person name="Shigenobu S."/>
            <person name="Watanabe H."/>
            <person name="Hattori M."/>
            <person name="Sakaki Y."/>
            <person name="Ishikawa H."/>
        </authorList>
    </citation>
    <scope>NUCLEOTIDE SEQUENCE [LARGE SCALE GENOMIC DNA]</scope>
    <source>
        <strain>APS</strain>
    </source>
</reference>
<protein>
    <recommendedName>
        <fullName>Phenylalanine--tRNA ligase alpha subunit</fullName>
        <ecNumber>6.1.1.20</ecNumber>
    </recommendedName>
    <alternativeName>
        <fullName>Phenylalanyl-tRNA synthetase alpha subunit</fullName>
        <shortName>PheRS</shortName>
    </alternativeName>
</protein>
<organism>
    <name type="scientific">Buchnera aphidicola subsp. Acyrthosiphon pisum (strain APS)</name>
    <name type="common">Acyrthosiphon pisum symbiotic bacterium</name>
    <dbReference type="NCBI Taxonomy" id="107806"/>
    <lineage>
        <taxon>Bacteria</taxon>
        <taxon>Pseudomonadati</taxon>
        <taxon>Pseudomonadota</taxon>
        <taxon>Gammaproteobacteria</taxon>
        <taxon>Enterobacterales</taxon>
        <taxon>Erwiniaceae</taxon>
        <taxon>Buchnera</taxon>
    </lineage>
</organism>
<sequence>MLNLNKLFEIIEIDIQNSKKISELDKIRIKYLGKKGVLTAFMKKLKDFSYEDKKKHSIIINKKKQEIISKINIKKQKLSVYILEQRIKSETIDISLPGRRTEHGGFHPITNTIDYIKNFFLKLGFQSINSPEIEDEYHNFDALNISKYHPARDSHDTFWFDRNRLLRTQTSSMQIRIMKQEKPPIRFIFPGKVYRNDYDITHTPMFHQIEGLIVDKNINFSNLKWIIYKFLYDFFGKEVLIKFRPSYFPFTVPSAEVDIIDHNGKSLEILGCGMVHPNVLKNVNIDSKIYSACAFGLGIERIAMLRYGITDIRSFFENDIRFLKQFKYN</sequence>
<proteinExistence type="inferred from homology"/>